<keyword id="KW-0067">ATP-binding</keyword>
<keyword id="KW-1003">Cell membrane</keyword>
<keyword id="KW-0325">Glycoprotein</keyword>
<keyword id="KW-0472">Membrane</keyword>
<keyword id="KW-0547">Nucleotide-binding</keyword>
<keyword id="KW-1185">Reference proteome</keyword>
<keyword id="KW-0677">Repeat</keyword>
<keyword id="KW-0812">Transmembrane</keyword>
<keyword id="KW-1133">Transmembrane helix</keyword>
<keyword id="KW-0813">Transport</keyword>
<sequence length="1567" mass="174822">MASQPPQPPSGQPDTQYEEYQSEVITETTNRPTPAADVYEITPTNDVMDDRYEHEHDDYESGAMYETVRTWSPQSRPELVRIASVFSRIDSHPDVAPTTEDGGQLNRRDTLAGVKIGDPVLDPTKPEFDFYKWARMFTHVMEKEGIKRNRTGVMFRNLTVLGSGSAVQYQDTFLSPFAAPFRPGELCGKGRNPEKVILHDFNGAIREGELLMVLGRPGSGCSTFLKAICGELHGLQKKKESIIHYNGVSQHTFKKELRGEAVYSAEDEHHFPHLTVGQTLEFAAAARTPSKRVLGLSRKDFSTHLARVMMSVFGLSHTYNTKVGDDYVRGVSGGERKRVSIAEIALSGAPICCWDNSTRGLDSATALEFTKALKIGSQVGGITQCLAIYQASQAIYDIFDKVIVLYEGRQIFFGPTRIAKQYFEEMGWYCPPRQTTADFLTSVTNPKERIAKEGYENRVPRTAVEFERYWKQSQNNKLLLANMDRFEAEYPPEEGHLEKLRETHGQAQAKHTASKSPYRISVPMQVKLCTVRAYQRLWGDKSSTIATNISQIMMALIIGSLFFDTPQTTDGFFAKGSVIFFAILLNGLMSITEINGLCKATEPIVPNAQRPIVVKHVNFAFYHAYSEALAGIVADIPIKFLLALVFNIIIYFLGGLERSAAKFFIFFLFTFITILTMSAIFRTLAAATKTIPQALALAGVMILALVIYTGFTLQPSYMHPWFKWILYINPIAYAYEALLVNEVHGNRYRCATPIPPYGSGKNFACAVAGAVPGEMSVSGDAWVESSYDYSYAHIWRNLGILLGFLAFFYFVYLMVSELNLSSASSAEFLVFRRGHLPKNFQGSKDEEAAAGGVMHPNDPARLPPTNTNGAAGETAPGGSTVAVIPPQKDIFTWRNVTYDITIKGEPRRLLDNISGWVRPGTLTALMGVSGAGKTTLLDALAQRTTMGVITGDMLVNGRPLDSSFQRKTGYVQQQDLHLETTTVREALRFSADLRQPKSVSRKEKYEYVEDVIKMLSMEDFSEAVVGNPGEGLNVEQRKLLTIGVELAAKPQLLLFLDEPTSGLDSQSSWSIVTFLRKLADNGQAVLSTIHQPSGILFEQFDRLLFLAKGGRTVYFGDIGKNSETLLNYFETHGAEPCGPSENPAEYMLNIVGAGPSGKSNIDWPVVWKESEESRHVQQELDRIQSETSKRNEGHGQSAEKEPGEFAMPFTSQLYCVTTRVFQQYWRTPSYIWGKLLLGLASALFIGFSFFLQNSSMAGLQNSLFSIFMLTTIFSSLVQQIMPRFVTQRDLFEVRERPSRAYSWKVFLLANIIVEIPYQILLGIIAWASLFYPTFGAHLSSERQGILLLYCVQFFIFASTFAQMIIAGLPDAETAGGIATTMFGLMVTFNGVLQKPNALPGFWRFMWRVSPITYTVGGLAATSLHSREVKCAQNELAIFDPPSGATCAQYLQKLVEAGAPGKLYNPMSTSQCQYCPLSSGDQFLGGSEIHWSDRWRNFGIGWAYIVFNIFATVALYYLIRVRKSSGRPNRIISVITYHLSQFGTYCRAFITGRKEKCPRKREQIGKIY</sequence>
<accession>A0A059J0G5</accession>
<organism>
    <name type="scientific">Trichophyton interdigitale (strain MR816)</name>
    <dbReference type="NCBI Taxonomy" id="1215338"/>
    <lineage>
        <taxon>Eukaryota</taxon>
        <taxon>Fungi</taxon>
        <taxon>Dikarya</taxon>
        <taxon>Ascomycota</taxon>
        <taxon>Pezizomycotina</taxon>
        <taxon>Eurotiomycetes</taxon>
        <taxon>Eurotiomycetidae</taxon>
        <taxon>Onygenales</taxon>
        <taxon>Arthrodermataceae</taxon>
        <taxon>Trichophyton</taxon>
    </lineage>
</organism>
<feature type="chain" id="PRO_0000447175" description="ABC multidrug transporter MDR1">
    <location>
        <begin position="1"/>
        <end position="1567"/>
    </location>
</feature>
<feature type="transmembrane region" description="Helical" evidence="2">
    <location>
        <begin position="543"/>
        <end position="563"/>
    </location>
</feature>
<feature type="transmembrane region" description="Helical" evidence="2">
    <location>
        <begin position="571"/>
        <end position="591"/>
    </location>
</feature>
<feature type="transmembrane region" description="Helical" evidence="2">
    <location>
        <begin position="636"/>
        <end position="656"/>
    </location>
</feature>
<feature type="transmembrane region" description="Helical" evidence="2">
    <location>
        <begin position="661"/>
        <end position="681"/>
    </location>
</feature>
<feature type="transmembrane region" description="Helical" evidence="2">
    <location>
        <begin position="691"/>
        <end position="711"/>
    </location>
</feature>
<feature type="transmembrane region" description="Helical" evidence="2">
    <location>
        <begin position="798"/>
        <end position="818"/>
    </location>
</feature>
<feature type="transmembrane region" description="Helical" evidence="2">
    <location>
        <begin position="1231"/>
        <end position="1251"/>
    </location>
</feature>
<feature type="transmembrane region" description="Helical" evidence="2">
    <location>
        <begin position="1257"/>
        <end position="1277"/>
    </location>
</feature>
<feature type="transmembrane region" description="Helical" evidence="2">
    <location>
        <begin position="1305"/>
        <end position="1325"/>
    </location>
</feature>
<feature type="transmembrane region" description="Helical" evidence="2">
    <location>
        <begin position="1345"/>
        <end position="1365"/>
    </location>
</feature>
<feature type="transmembrane region" description="Helical" evidence="2">
    <location>
        <begin position="1372"/>
        <end position="1392"/>
    </location>
</feature>
<feature type="transmembrane region" description="Helical" evidence="2">
    <location>
        <begin position="1498"/>
        <end position="1518"/>
    </location>
</feature>
<feature type="domain" description="ABC transporter 1" evidence="3">
    <location>
        <begin position="167"/>
        <end position="432"/>
    </location>
</feature>
<feature type="domain" description="ABC transporter 2" evidence="3">
    <location>
        <begin position="891"/>
        <end position="1134"/>
    </location>
</feature>
<feature type="region of interest" description="Disordered" evidence="5">
    <location>
        <begin position="1"/>
        <end position="37"/>
    </location>
</feature>
<feature type="region of interest" description="Disordered" evidence="5">
    <location>
        <begin position="1172"/>
        <end position="1202"/>
    </location>
</feature>
<feature type="compositionally biased region" description="Pro residues" evidence="5">
    <location>
        <begin position="1"/>
        <end position="11"/>
    </location>
</feature>
<feature type="compositionally biased region" description="Polar residues" evidence="5">
    <location>
        <begin position="22"/>
        <end position="32"/>
    </location>
</feature>
<feature type="binding site" evidence="3">
    <location>
        <begin position="927"/>
        <end position="934"/>
    </location>
    <ligand>
        <name>ATP</name>
        <dbReference type="ChEBI" id="CHEBI:30616"/>
    </ligand>
</feature>
<feature type="glycosylation site" description="N-linked (GlcNAc...) asparagine" evidence="4">
    <location>
        <position position="149"/>
    </location>
</feature>
<feature type="glycosylation site" description="N-linked (GlcNAc...) asparagine" evidence="4">
    <location>
        <position position="157"/>
    </location>
</feature>
<feature type="glycosylation site" description="N-linked (GlcNAc...) asparagine" evidence="4">
    <location>
        <position position="356"/>
    </location>
</feature>
<feature type="glycosylation site" description="N-linked (GlcNAc...) asparagine" evidence="4">
    <location>
        <position position="819"/>
    </location>
</feature>
<feature type="glycosylation site" description="N-linked (GlcNAc...) asparagine" evidence="4">
    <location>
        <position position="895"/>
    </location>
</feature>
<feature type="glycosylation site" description="N-linked (GlcNAc...) asparagine" evidence="4">
    <location>
        <position position="912"/>
    </location>
</feature>
<feature type="glycosylation site" description="N-linked (GlcNAc...) asparagine" evidence="4">
    <location>
        <position position="1253"/>
    </location>
</feature>
<protein>
    <recommendedName>
        <fullName evidence="8">ABC multidrug transporter MDR1</fullName>
    </recommendedName>
    <alternativeName>
        <fullName evidence="8">Multidrug resistance protein 1</fullName>
    </alternativeName>
</protein>
<gene>
    <name evidence="8" type="primary">MDR1</name>
    <name type="ORF">H109_06929</name>
</gene>
<name>MDR1_TRIIM</name>
<evidence type="ECO:0000250" key="1">
    <source>
        <dbReference type="UniProtKB" id="F2SHL1"/>
    </source>
</evidence>
<evidence type="ECO:0000255" key="2"/>
<evidence type="ECO:0000255" key="3">
    <source>
        <dbReference type="PROSITE-ProRule" id="PRU00434"/>
    </source>
</evidence>
<evidence type="ECO:0000255" key="4">
    <source>
        <dbReference type="PROSITE-ProRule" id="PRU00498"/>
    </source>
</evidence>
<evidence type="ECO:0000256" key="5">
    <source>
        <dbReference type="SAM" id="MobiDB-lite"/>
    </source>
</evidence>
<evidence type="ECO:0000269" key="6">
    <source>
    </source>
</evidence>
<evidence type="ECO:0000269" key="7">
    <source>
    </source>
</evidence>
<evidence type="ECO:0000303" key="8">
    <source>
    </source>
</evidence>
<evidence type="ECO:0000305" key="9"/>
<evidence type="ECO:0000305" key="10">
    <source>
    </source>
</evidence>
<reference key="1">
    <citation type="journal article" date="2018" name="Genetics">
        <title>Whole-genome analysis illustrates global clonal population structure of the ubiquitous dermatophyte pathogen Trichophyton rubrum.</title>
        <authorList>
            <person name="Persinoti G.F."/>
            <person name="Martinez D.A."/>
            <person name="Li W."/>
            <person name="Doegen A."/>
            <person name="Billmyre R.B."/>
            <person name="Averette A."/>
            <person name="Goldberg J.M."/>
            <person name="Shea T."/>
            <person name="Young S."/>
            <person name="Zeng Q."/>
            <person name="Oliver B.G."/>
            <person name="Barton R."/>
            <person name="Metin B."/>
            <person name="Hilmioglu-Polat S."/>
            <person name="Ilkit M."/>
            <person name="Graeser Y."/>
            <person name="Martinez-Rossi N.M."/>
            <person name="White T.C."/>
            <person name="Heitman J."/>
            <person name="Cuomo C.A."/>
        </authorList>
    </citation>
    <scope>NUCLEOTIDE SEQUENCE [LARGE SCALE GENOMIC DNA]</scope>
    <source>
        <strain>MR816</strain>
    </source>
</reference>
<reference key="2">
    <citation type="journal article" date="2006" name="Med. Mycol.">
        <title>Molecular cloning and characterization of a novel ABC transporter gene in the human pathogen Trichophyton rubrum.</title>
        <authorList>
            <person name="Cervelatti E.P."/>
            <person name="Fachin A.L."/>
            <person name="Ferreira-Nozawa M.S."/>
            <person name="Martinez-Rossi N.M."/>
        </authorList>
    </citation>
    <scope>IDENTIFICATION</scope>
    <scope>FUNCTION</scope>
    <scope>INDUCTION</scope>
</reference>
<reference key="3">
    <citation type="journal article" date="2016" name="J. Med. Microbiol.">
        <title>Compensatory expression of multidrug-resistance genes encoding ABC transporters in dermatophytes.</title>
        <authorList>
            <person name="Martins M.P."/>
            <person name="Franceschini A.C.C."/>
            <person name="Jacob T.R."/>
            <person name="Rossi A."/>
            <person name="Martinez-Rossi N.M."/>
        </authorList>
    </citation>
    <scope>INDUCTION</scope>
</reference>
<comment type="function">
    <text evidence="6">Pleiotropic ABC efflux transporter that may be involved in the modulation susceptibility to a wide range of unrelated cytotoxic compounds, including ethidium bromide, ketoconazole, cycloheximide, fluconazole, griseofulvin, imazalil and itraconazole.</text>
</comment>
<comment type="catalytic activity">
    <reaction evidence="1">
        <text>voriconazole(in) + ATP + H2O = voriconazole(out) + ADP + phosphate + H(+)</text>
        <dbReference type="Rhea" id="RHEA:61912"/>
        <dbReference type="ChEBI" id="CHEBI:10023"/>
        <dbReference type="ChEBI" id="CHEBI:15377"/>
        <dbReference type="ChEBI" id="CHEBI:15378"/>
        <dbReference type="ChEBI" id="CHEBI:30616"/>
        <dbReference type="ChEBI" id="CHEBI:43474"/>
        <dbReference type="ChEBI" id="CHEBI:456216"/>
    </reaction>
    <physiologicalReaction direction="left-to-right" evidence="1">
        <dbReference type="Rhea" id="RHEA:61913"/>
    </physiologicalReaction>
</comment>
<comment type="catalytic activity">
    <reaction evidence="1">
        <text>fluconazole(in) + ATP + H2O = fluconazole(out) + ADP + phosphate + H(+)</text>
        <dbReference type="Rhea" id="RHEA:61916"/>
        <dbReference type="ChEBI" id="CHEBI:15377"/>
        <dbReference type="ChEBI" id="CHEBI:15378"/>
        <dbReference type="ChEBI" id="CHEBI:30616"/>
        <dbReference type="ChEBI" id="CHEBI:43474"/>
        <dbReference type="ChEBI" id="CHEBI:46081"/>
        <dbReference type="ChEBI" id="CHEBI:456216"/>
    </reaction>
    <physiologicalReaction direction="left-to-right" evidence="1">
        <dbReference type="Rhea" id="RHEA:61917"/>
    </physiologicalReaction>
</comment>
<comment type="catalytic activity">
    <reaction evidence="1">
        <text>(R)-miconazole(in) + ATP + H2O = (R)-miconazole(out) + ADP + phosphate + H(+)</text>
        <dbReference type="Rhea" id="RHEA:61928"/>
        <dbReference type="ChEBI" id="CHEBI:15377"/>
        <dbReference type="ChEBI" id="CHEBI:15378"/>
        <dbReference type="ChEBI" id="CHEBI:30616"/>
        <dbReference type="ChEBI" id="CHEBI:43474"/>
        <dbReference type="ChEBI" id="CHEBI:82894"/>
        <dbReference type="ChEBI" id="CHEBI:456216"/>
    </reaction>
    <physiologicalReaction direction="left-to-right" evidence="1">
        <dbReference type="Rhea" id="RHEA:61929"/>
    </physiologicalReaction>
</comment>
<comment type="catalytic activity">
    <reaction evidence="1">
        <text>(S)-miconazole(in) + ATP + H2O = (S)-miconazole(out) + ADP + phosphate + H(+)</text>
        <dbReference type="Rhea" id="RHEA:61932"/>
        <dbReference type="ChEBI" id="CHEBI:15377"/>
        <dbReference type="ChEBI" id="CHEBI:15378"/>
        <dbReference type="ChEBI" id="CHEBI:30616"/>
        <dbReference type="ChEBI" id="CHEBI:43474"/>
        <dbReference type="ChEBI" id="CHEBI:82897"/>
        <dbReference type="ChEBI" id="CHEBI:456216"/>
    </reaction>
    <physiologicalReaction direction="left-to-right" evidence="1">
        <dbReference type="Rhea" id="RHEA:61933"/>
    </physiologicalReaction>
</comment>
<comment type="subcellular location">
    <subcellularLocation>
        <location evidence="9">Cell membrane</location>
        <topology evidence="2">Multi-pass membrane protein</topology>
    </subcellularLocation>
</comment>
<comment type="induction">
    <text evidence="6 7">Expression is induced upon exposure to a wide range of unrelated cytotoxic compounds, including ethidium bromide, ketoconazole, cycloheximide, fluconazole, griseofulvin, imazalil, itraconazole or amphotericin B.</text>
</comment>
<comment type="similarity">
    <text evidence="9">Belongs to the ABC transporter superfamily. ABCG family. PDR (TC 3.A.1.205) subfamily.</text>
</comment>
<comment type="caution">
    <text evidence="10">This protein was first identified as a Trichophyton rubrum transporter and called TruMDR1, but it was further realized that the isolate used for the identification was a Trichophyton interdigitale isolate.</text>
</comment>
<dbReference type="EMBL" id="AOKY01000594">
    <property type="protein sequence ID" value="KDB21163.1"/>
    <property type="molecule type" value="Genomic_DNA"/>
</dbReference>
<dbReference type="SMR" id="A0A059J0G5"/>
<dbReference type="STRING" id="1215338.A0A059J0G5"/>
<dbReference type="GlyCosmos" id="A0A059J0G5">
    <property type="glycosylation" value="7 sites, No reported glycans"/>
</dbReference>
<dbReference type="HOGENOM" id="CLU_000604_35_0_1"/>
<dbReference type="OMA" id="MPRFVTQ"/>
<dbReference type="OrthoDB" id="245989at2759"/>
<dbReference type="Proteomes" id="UP000024533">
    <property type="component" value="Unassembled WGS sequence"/>
</dbReference>
<dbReference type="GO" id="GO:0005886">
    <property type="term" value="C:plasma membrane"/>
    <property type="evidence" value="ECO:0007669"/>
    <property type="project" value="UniProtKB-SubCell"/>
</dbReference>
<dbReference type="GO" id="GO:0140359">
    <property type="term" value="F:ABC-type transporter activity"/>
    <property type="evidence" value="ECO:0007669"/>
    <property type="project" value="InterPro"/>
</dbReference>
<dbReference type="GO" id="GO:0005524">
    <property type="term" value="F:ATP binding"/>
    <property type="evidence" value="ECO:0007669"/>
    <property type="project" value="UniProtKB-KW"/>
</dbReference>
<dbReference type="GO" id="GO:0016887">
    <property type="term" value="F:ATP hydrolysis activity"/>
    <property type="evidence" value="ECO:0007669"/>
    <property type="project" value="InterPro"/>
</dbReference>
<dbReference type="CDD" id="cd03233">
    <property type="entry name" value="ABCG_PDR_domain1"/>
    <property type="match status" value="1"/>
</dbReference>
<dbReference type="CDD" id="cd03232">
    <property type="entry name" value="ABCG_PDR_domain2"/>
    <property type="match status" value="1"/>
</dbReference>
<dbReference type="FunFam" id="3.40.50.300:FF:000054">
    <property type="entry name" value="ABC multidrug transporter atrF"/>
    <property type="match status" value="1"/>
</dbReference>
<dbReference type="Gene3D" id="3.40.50.300">
    <property type="entry name" value="P-loop containing nucleotide triphosphate hydrolases"/>
    <property type="match status" value="2"/>
</dbReference>
<dbReference type="InterPro" id="IPR003593">
    <property type="entry name" value="AAA+_ATPase"/>
</dbReference>
<dbReference type="InterPro" id="IPR013525">
    <property type="entry name" value="ABC2_TM"/>
</dbReference>
<dbReference type="InterPro" id="IPR029481">
    <property type="entry name" value="ABC_trans_N"/>
</dbReference>
<dbReference type="InterPro" id="IPR003439">
    <property type="entry name" value="ABC_transporter-like_ATP-bd"/>
</dbReference>
<dbReference type="InterPro" id="IPR017871">
    <property type="entry name" value="ABC_transporter-like_CS"/>
</dbReference>
<dbReference type="InterPro" id="IPR043926">
    <property type="entry name" value="ABCG_dom"/>
</dbReference>
<dbReference type="InterPro" id="IPR034001">
    <property type="entry name" value="ABCG_PDR_1"/>
</dbReference>
<dbReference type="InterPro" id="IPR034003">
    <property type="entry name" value="ABCG_PDR_2"/>
</dbReference>
<dbReference type="InterPro" id="IPR027417">
    <property type="entry name" value="P-loop_NTPase"/>
</dbReference>
<dbReference type="InterPro" id="IPR010929">
    <property type="entry name" value="PDR_CDR_ABC"/>
</dbReference>
<dbReference type="PANTHER" id="PTHR19241">
    <property type="entry name" value="ATP-BINDING CASSETTE TRANSPORTER"/>
    <property type="match status" value="1"/>
</dbReference>
<dbReference type="Pfam" id="PF01061">
    <property type="entry name" value="ABC2_membrane"/>
    <property type="match status" value="2"/>
</dbReference>
<dbReference type="Pfam" id="PF19055">
    <property type="entry name" value="ABC2_membrane_7"/>
    <property type="match status" value="1"/>
</dbReference>
<dbReference type="Pfam" id="PF00005">
    <property type="entry name" value="ABC_tran"/>
    <property type="match status" value="2"/>
</dbReference>
<dbReference type="Pfam" id="PF14510">
    <property type="entry name" value="ABC_trans_N"/>
    <property type="match status" value="1"/>
</dbReference>
<dbReference type="Pfam" id="PF06422">
    <property type="entry name" value="PDR_CDR"/>
    <property type="match status" value="2"/>
</dbReference>
<dbReference type="SMART" id="SM00382">
    <property type="entry name" value="AAA"/>
    <property type="match status" value="2"/>
</dbReference>
<dbReference type="SUPFAM" id="SSF52540">
    <property type="entry name" value="P-loop containing nucleoside triphosphate hydrolases"/>
    <property type="match status" value="2"/>
</dbReference>
<dbReference type="PROSITE" id="PS00211">
    <property type="entry name" value="ABC_TRANSPORTER_1"/>
    <property type="match status" value="1"/>
</dbReference>
<dbReference type="PROSITE" id="PS50893">
    <property type="entry name" value="ABC_TRANSPORTER_2"/>
    <property type="match status" value="2"/>
</dbReference>
<proteinExistence type="evidence at transcript level"/>